<proteinExistence type="evidence at protein level"/>
<reference key="1">
    <citation type="journal article" date="1986" name="FEBS Lett.">
        <title>Primary structure of the alpha-subunit of bovine adenylate cyclase-inhibiting G-protein deduced from the cDNA sequence.</title>
        <authorList>
            <person name="Nukada T."/>
            <person name="Tanabe T."/>
            <person name="Takahashi H."/>
            <person name="Noda M."/>
            <person name="Haga K."/>
            <person name="Haga T."/>
            <person name="Ichiyama A."/>
            <person name="Kangawa K."/>
            <person name="Hiranaga M."/>
            <person name="Matsuo H."/>
            <person name="Numa S."/>
        </authorList>
    </citation>
    <scope>NUCLEOTIDE SEQUENCE [MRNA]</scope>
</reference>
<reference key="2">
    <citation type="submission" date="2005-09" db="EMBL/GenBank/DDBJ databases">
        <authorList>
            <consortium name="NIH - Mammalian Gene Collection (MGC) project"/>
        </authorList>
    </citation>
    <scope>NUCLEOTIDE SEQUENCE [LARGE SCALE MRNA]</scope>
    <source>
        <strain>Hereford</strain>
        <tissue>Hypothalamus</tissue>
    </source>
</reference>
<reference key="3">
    <citation type="journal article" date="1986" name="Proc. Natl. Acad. Sci. U.S.A.">
        <title>Molecular cloning and characterization of cDNA encoding the GTP-binding protein alpha i and identification of a related protein, alpha h.</title>
        <authorList>
            <person name="Michel T."/>
            <person name="Winslow J.W."/>
            <person name="Smith J.A."/>
            <person name="Seidman J.G."/>
            <person name="Neer E.J."/>
        </authorList>
    </citation>
    <scope>NUCLEOTIDE SEQUENCE [MRNA] OF 106-354</scope>
</reference>
<feature type="initiator methionine" description="Removed" evidence="2">
    <location>
        <position position="1"/>
    </location>
</feature>
<feature type="chain" id="PRO_0000203669" description="Guanine nucleotide-binding protein G(i) subunit alpha-1">
    <location>
        <begin position="2"/>
        <end position="354"/>
    </location>
</feature>
<feature type="domain" description="G-alpha" evidence="3">
    <location>
        <begin position="32"/>
        <end position="354"/>
    </location>
</feature>
<feature type="region of interest" description="G1 motif" evidence="3">
    <location>
        <begin position="35"/>
        <end position="48"/>
    </location>
</feature>
<feature type="region of interest" description="G2 motif" evidence="3">
    <location>
        <begin position="173"/>
        <end position="181"/>
    </location>
</feature>
<feature type="region of interest" description="G3 motif" evidence="3">
    <location>
        <begin position="196"/>
        <end position="205"/>
    </location>
</feature>
<feature type="region of interest" description="G4 motif" evidence="3">
    <location>
        <begin position="265"/>
        <end position="272"/>
    </location>
</feature>
<feature type="region of interest" description="G5 motif" evidence="3">
    <location>
        <begin position="324"/>
        <end position="329"/>
    </location>
</feature>
<feature type="binding site" evidence="1">
    <location>
        <begin position="43"/>
        <end position="48"/>
    </location>
    <ligand>
        <name>GTP</name>
        <dbReference type="ChEBI" id="CHEBI:37565"/>
    </ligand>
</feature>
<feature type="binding site" evidence="1">
    <location>
        <position position="47"/>
    </location>
    <ligand>
        <name>Mg(2+)</name>
        <dbReference type="ChEBI" id="CHEBI:18420"/>
    </ligand>
</feature>
<feature type="binding site" evidence="1">
    <location>
        <begin position="150"/>
        <end position="151"/>
    </location>
    <ligand>
        <name>GTP</name>
        <dbReference type="ChEBI" id="CHEBI:37565"/>
    </ligand>
</feature>
<feature type="binding site" evidence="1">
    <location>
        <begin position="175"/>
        <end position="178"/>
    </location>
    <ligand>
        <name>GTP</name>
        <dbReference type="ChEBI" id="CHEBI:37565"/>
    </ligand>
</feature>
<feature type="binding site" evidence="1">
    <location>
        <position position="181"/>
    </location>
    <ligand>
        <name>Mg(2+)</name>
        <dbReference type="ChEBI" id="CHEBI:18420"/>
    </ligand>
</feature>
<feature type="binding site" evidence="1">
    <location>
        <begin position="200"/>
        <end position="204"/>
    </location>
    <ligand>
        <name>GTP</name>
        <dbReference type="ChEBI" id="CHEBI:37565"/>
    </ligand>
</feature>
<feature type="binding site" evidence="1">
    <location>
        <begin position="269"/>
        <end position="272"/>
    </location>
    <ligand>
        <name>GTP</name>
        <dbReference type="ChEBI" id="CHEBI:37565"/>
    </ligand>
</feature>
<feature type="binding site" evidence="1">
    <location>
        <position position="326"/>
    </location>
    <ligand>
        <name>GTP</name>
        <dbReference type="ChEBI" id="CHEBI:37565"/>
    </ligand>
</feature>
<feature type="lipid moiety-binding region" description="N-myristoyl glycine" evidence="2">
    <location>
        <position position="2"/>
    </location>
</feature>
<feature type="lipid moiety-binding region" description="S-palmitoyl cysteine" evidence="1">
    <location>
        <position position="3"/>
    </location>
</feature>
<feature type="sequence conflict" description="In Ref. 3; AAA30561." evidence="4" ref="3">
    <original>A</original>
    <variation>S</variation>
    <location>
        <position position="113"/>
    </location>
</feature>
<feature type="sequence conflict" description="In Ref. 3; AAA30561." evidence="4" ref="3">
    <original>K</original>
    <variation>N</variation>
    <location>
        <position position="330"/>
    </location>
</feature>
<feature type="sequence conflict" description="In Ref. 3; AAA30561." evidence="4" ref="3">
    <original>D</original>
    <variation>E</variation>
    <location>
        <position position="337"/>
    </location>
</feature>
<feature type="helix" evidence="6">
    <location>
        <begin position="9"/>
        <end position="32"/>
    </location>
</feature>
<feature type="strand" evidence="6">
    <location>
        <begin position="33"/>
        <end position="39"/>
    </location>
</feature>
<feature type="strand" evidence="6">
    <location>
        <begin position="41"/>
        <end position="43"/>
    </location>
</feature>
<feature type="helix" evidence="6">
    <location>
        <begin position="44"/>
        <end position="52"/>
    </location>
</feature>
<feature type="strand" evidence="6">
    <location>
        <begin position="185"/>
        <end position="191"/>
    </location>
</feature>
<feature type="strand" evidence="6">
    <location>
        <begin position="194"/>
        <end position="200"/>
    </location>
</feature>
<feature type="helix" evidence="6">
    <location>
        <begin position="208"/>
        <end position="210"/>
    </location>
</feature>
<feature type="helix" evidence="6">
    <location>
        <begin position="212"/>
        <end position="215"/>
    </location>
</feature>
<feature type="strand" evidence="6">
    <location>
        <begin position="219"/>
        <end position="226"/>
    </location>
</feature>
<feature type="helix" evidence="6">
    <location>
        <begin position="227"/>
        <end position="230"/>
    </location>
</feature>
<feature type="helix" evidence="6">
    <location>
        <begin position="242"/>
        <end position="254"/>
    </location>
</feature>
<feature type="turn" evidence="5">
    <location>
        <begin position="258"/>
        <end position="261"/>
    </location>
</feature>
<feature type="strand" evidence="6">
    <location>
        <begin position="263"/>
        <end position="269"/>
    </location>
</feature>
<feature type="helix" evidence="6">
    <location>
        <begin position="271"/>
        <end position="278"/>
    </location>
</feature>
<feature type="helix" evidence="6">
    <location>
        <begin position="283"/>
        <end position="285"/>
    </location>
</feature>
<feature type="helix" evidence="6">
    <location>
        <begin position="296"/>
        <end position="308"/>
    </location>
</feature>
<feature type="turn" evidence="6">
    <location>
        <begin position="314"/>
        <end position="316"/>
    </location>
</feature>
<feature type="strand" evidence="6">
    <location>
        <begin position="319"/>
        <end position="323"/>
    </location>
</feature>
<feature type="strand" evidence="7">
    <location>
        <begin position="326"/>
        <end position="328"/>
    </location>
</feature>
<feature type="helix" evidence="6">
    <location>
        <begin position="330"/>
        <end position="351"/>
    </location>
</feature>
<dbReference type="EC" id="3.6.5.-" evidence="2"/>
<dbReference type="EMBL" id="X03642">
    <property type="protein sequence ID" value="CAA27288.1"/>
    <property type="molecule type" value="mRNA"/>
</dbReference>
<dbReference type="EMBL" id="BC105419">
    <property type="protein sequence ID" value="AAI05420.1"/>
    <property type="molecule type" value="mRNA"/>
</dbReference>
<dbReference type="EMBL" id="M14207">
    <property type="protein sequence ID" value="AAA30561.1"/>
    <property type="molecule type" value="mRNA"/>
</dbReference>
<dbReference type="PIR" id="A23631">
    <property type="entry name" value="RGBOI1"/>
</dbReference>
<dbReference type="RefSeq" id="NP_776749.1">
    <property type="nucleotide sequence ID" value="NM_174324.2"/>
</dbReference>
<dbReference type="RefSeq" id="XP_015324318.1">
    <property type="nucleotide sequence ID" value="XM_015468832.3"/>
</dbReference>
<dbReference type="PDB" id="6K42">
    <property type="method" value="EM"/>
    <property type="resolution" value="4.10 A"/>
    <property type="chains" value="A=1-354"/>
</dbReference>
<dbReference type="PDB" id="6NBF">
    <property type="method" value="EM"/>
    <property type="resolution" value="3.00 A"/>
    <property type="chains" value="A=61-184"/>
</dbReference>
<dbReference type="PDB" id="6NBH">
    <property type="method" value="EM"/>
    <property type="resolution" value="3.50 A"/>
    <property type="chains" value="A=61-184"/>
</dbReference>
<dbReference type="PDB" id="6NBI">
    <property type="method" value="EM"/>
    <property type="resolution" value="4.00 A"/>
    <property type="chains" value="A=61-184"/>
</dbReference>
<dbReference type="PDB" id="7D68">
    <property type="method" value="EM"/>
    <property type="resolution" value="3.00 A"/>
    <property type="chains" value="A=61-184"/>
</dbReference>
<dbReference type="PDB" id="7EQ1">
    <property type="method" value="EM"/>
    <property type="resolution" value="3.30 A"/>
    <property type="chains" value="A=4-19, A=61-181, A=229-242"/>
</dbReference>
<dbReference type="PDB" id="8X16">
    <property type="method" value="EM"/>
    <property type="resolution" value="3.29 A"/>
    <property type="chains" value="A=1-354"/>
</dbReference>
<dbReference type="PDB" id="8X17">
    <property type="method" value="EM"/>
    <property type="resolution" value="3.19 A"/>
    <property type="chains" value="A=1-354"/>
</dbReference>
<dbReference type="PDB" id="8YH3">
    <property type="method" value="EM"/>
    <property type="resolution" value="3.40 A"/>
    <property type="chains" value="A/G=3-354"/>
</dbReference>
<dbReference type="PDB" id="8YH5">
    <property type="method" value="EM"/>
    <property type="resolution" value="3.66 A"/>
    <property type="chains" value="A/G=3-354"/>
</dbReference>
<dbReference type="PDB" id="8YH6">
    <property type="method" value="EM"/>
    <property type="resolution" value="3.62 A"/>
    <property type="chains" value="A/G=3-354"/>
</dbReference>
<dbReference type="PDB" id="9J5V">
    <property type="method" value="EM"/>
    <property type="resolution" value="2.86 A"/>
    <property type="chains" value="A=1-354"/>
</dbReference>
<dbReference type="PDBsum" id="6K42"/>
<dbReference type="PDBsum" id="6NBF"/>
<dbReference type="PDBsum" id="6NBH"/>
<dbReference type="PDBsum" id="6NBI"/>
<dbReference type="PDBsum" id="7D68"/>
<dbReference type="PDBsum" id="7EQ1"/>
<dbReference type="PDBsum" id="8X16"/>
<dbReference type="PDBsum" id="8X17"/>
<dbReference type="PDBsum" id="8YH3"/>
<dbReference type="PDBsum" id="8YH5"/>
<dbReference type="PDBsum" id="8YH6"/>
<dbReference type="PDBsum" id="9J5V"/>
<dbReference type="EMDB" id="EMD-37985"/>
<dbReference type="EMDB" id="EMD-37986"/>
<dbReference type="EMDB" id="EMD-39280"/>
<dbReference type="EMDB" id="EMD-39281"/>
<dbReference type="EMDB" id="EMD-39282"/>
<dbReference type="EMDB" id="EMD-61154"/>
<dbReference type="EMDB" id="EMD-9912"/>
<dbReference type="SMR" id="P63097"/>
<dbReference type="BioGRID" id="159104">
    <property type="interactions" value="2"/>
</dbReference>
<dbReference type="DIP" id="DIP-41168N"/>
<dbReference type="FunCoup" id="P63097">
    <property type="interactions" value="3033"/>
</dbReference>
<dbReference type="IntAct" id="P63097">
    <property type="interactions" value="1"/>
</dbReference>
<dbReference type="MINT" id="P63097"/>
<dbReference type="STRING" id="9913.ENSBTAP00000003515"/>
<dbReference type="SwissPalm" id="P63097"/>
<dbReference type="PaxDb" id="9913-ENSBTAP00000003515"/>
<dbReference type="GeneID" id="281790"/>
<dbReference type="KEGG" id="bta:281790"/>
<dbReference type="CTD" id="2770"/>
<dbReference type="VEuPathDB" id="HostDB:ENSBTAG00000002714"/>
<dbReference type="eggNOG" id="KOG0082">
    <property type="taxonomic scope" value="Eukaryota"/>
</dbReference>
<dbReference type="HOGENOM" id="CLU_014184_6_0_1"/>
<dbReference type="InParanoid" id="P63097"/>
<dbReference type="OMA" id="QVIWADA"/>
<dbReference type="OrthoDB" id="5817230at2759"/>
<dbReference type="TreeFam" id="TF300673"/>
<dbReference type="Reactome" id="R-BTA-170670">
    <property type="pathway name" value="Adenylate cyclase inhibitory pathway"/>
</dbReference>
<dbReference type="Reactome" id="R-BTA-392170">
    <property type="pathway name" value="ADP signalling through P2Y purinoceptor 12"/>
</dbReference>
<dbReference type="Reactome" id="R-BTA-400042">
    <property type="pathway name" value="Adrenaline,noradrenaline inhibits insulin secretion"/>
</dbReference>
<dbReference type="Reactome" id="R-BTA-418594">
    <property type="pathway name" value="G alpha (i) signalling events"/>
</dbReference>
<dbReference type="Reactome" id="R-BTA-9009391">
    <property type="pathway name" value="Extra-nuclear estrogen signaling"/>
</dbReference>
<dbReference type="Proteomes" id="UP000009136">
    <property type="component" value="Chromosome 4"/>
</dbReference>
<dbReference type="Bgee" id="ENSBTAG00000002714">
    <property type="expression patterns" value="Expressed in omental fat pad and 105 other cell types or tissues"/>
</dbReference>
<dbReference type="GO" id="GO:0005938">
    <property type="term" value="C:cell cortex"/>
    <property type="evidence" value="ECO:0000250"/>
    <property type="project" value="UniProtKB"/>
</dbReference>
<dbReference type="GO" id="GO:0005813">
    <property type="term" value="C:centrosome"/>
    <property type="evidence" value="ECO:0000250"/>
    <property type="project" value="UniProtKB"/>
</dbReference>
<dbReference type="GO" id="GO:0005737">
    <property type="term" value="C:cytoplasm"/>
    <property type="evidence" value="ECO:0000250"/>
    <property type="project" value="UniProtKB"/>
</dbReference>
<dbReference type="GO" id="GO:0005834">
    <property type="term" value="C:heterotrimeric G-protein complex"/>
    <property type="evidence" value="ECO:0000318"/>
    <property type="project" value="GO_Central"/>
</dbReference>
<dbReference type="GO" id="GO:0030496">
    <property type="term" value="C:midbody"/>
    <property type="evidence" value="ECO:0000250"/>
    <property type="project" value="UniProtKB"/>
</dbReference>
<dbReference type="GO" id="GO:0005634">
    <property type="term" value="C:nucleus"/>
    <property type="evidence" value="ECO:0007669"/>
    <property type="project" value="UniProtKB-SubCell"/>
</dbReference>
<dbReference type="GO" id="GO:0005886">
    <property type="term" value="C:plasma membrane"/>
    <property type="evidence" value="ECO:0000250"/>
    <property type="project" value="UniProtKB"/>
</dbReference>
<dbReference type="GO" id="GO:0001664">
    <property type="term" value="F:G protein-coupled receptor binding"/>
    <property type="evidence" value="ECO:0000250"/>
    <property type="project" value="UniProtKB"/>
</dbReference>
<dbReference type="GO" id="GO:0031821">
    <property type="term" value="F:G protein-coupled serotonin receptor binding"/>
    <property type="evidence" value="ECO:0000318"/>
    <property type="project" value="GO_Central"/>
</dbReference>
<dbReference type="GO" id="GO:0031683">
    <property type="term" value="F:G-protein beta/gamma-subunit complex binding"/>
    <property type="evidence" value="ECO:0000318"/>
    <property type="project" value="GO_Central"/>
</dbReference>
<dbReference type="GO" id="GO:0019003">
    <property type="term" value="F:GDP binding"/>
    <property type="evidence" value="ECO:0000250"/>
    <property type="project" value="UniProtKB"/>
</dbReference>
<dbReference type="GO" id="GO:0005525">
    <property type="term" value="F:GTP binding"/>
    <property type="evidence" value="ECO:0000250"/>
    <property type="project" value="UniProtKB"/>
</dbReference>
<dbReference type="GO" id="GO:0003924">
    <property type="term" value="F:GTPase activity"/>
    <property type="evidence" value="ECO:0000250"/>
    <property type="project" value="UniProtKB"/>
</dbReference>
<dbReference type="GO" id="GO:0000287">
    <property type="term" value="F:magnesium ion binding"/>
    <property type="evidence" value="ECO:0000250"/>
    <property type="project" value="UniProtKB"/>
</dbReference>
<dbReference type="GO" id="GO:0007188">
    <property type="term" value="P:adenylate cyclase-modulating G protein-coupled receptor signaling pathway"/>
    <property type="evidence" value="ECO:0000250"/>
    <property type="project" value="UniProtKB"/>
</dbReference>
<dbReference type="GO" id="GO:0051301">
    <property type="term" value="P:cell division"/>
    <property type="evidence" value="ECO:0000250"/>
    <property type="project" value="UniProtKB"/>
</dbReference>
<dbReference type="GO" id="GO:1904322">
    <property type="term" value="P:cellular response to forskolin"/>
    <property type="evidence" value="ECO:0000250"/>
    <property type="project" value="UniProtKB"/>
</dbReference>
<dbReference type="GO" id="GO:0007186">
    <property type="term" value="P:G protein-coupled receptor signaling pathway"/>
    <property type="evidence" value="ECO:0000250"/>
    <property type="project" value="UniProtKB"/>
</dbReference>
<dbReference type="GO" id="GO:1904778">
    <property type="term" value="P:positive regulation of protein localization to cell cortex"/>
    <property type="evidence" value="ECO:0000250"/>
    <property type="project" value="UniProtKB"/>
</dbReference>
<dbReference type="GO" id="GO:0060236">
    <property type="term" value="P:regulation of mitotic spindle organization"/>
    <property type="evidence" value="ECO:0000250"/>
    <property type="project" value="UniProtKB"/>
</dbReference>
<dbReference type="CDD" id="cd00066">
    <property type="entry name" value="G-alpha"/>
    <property type="match status" value="1"/>
</dbReference>
<dbReference type="FunFam" id="1.10.400.10:FF:000001">
    <property type="entry name" value="Guanine nucleotide-binding protein G(I) subunit alpha"/>
    <property type="match status" value="1"/>
</dbReference>
<dbReference type="FunFam" id="3.40.50.300:FF:002487">
    <property type="entry name" value="Guanine nucleotide-binding protein G(i) subunit alpha-1"/>
    <property type="match status" value="1"/>
</dbReference>
<dbReference type="FunFam" id="3.40.50.300:FF:003559">
    <property type="entry name" value="Guanine nucleotide-binding protein G(i) subunit alpha-1"/>
    <property type="match status" value="1"/>
</dbReference>
<dbReference type="Gene3D" id="1.10.400.10">
    <property type="entry name" value="GI Alpha 1, domain 2-like"/>
    <property type="match status" value="1"/>
</dbReference>
<dbReference type="Gene3D" id="3.40.50.300">
    <property type="entry name" value="P-loop containing nucleotide triphosphate hydrolases"/>
    <property type="match status" value="1"/>
</dbReference>
<dbReference type="InterPro" id="IPR001408">
    <property type="entry name" value="Gprotein_alpha_I"/>
</dbReference>
<dbReference type="InterPro" id="IPR001019">
    <property type="entry name" value="Gprotein_alpha_su"/>
</dbReference>
<dbReference type="InterPro" id="IPR011025">
    <property type="entry name" value="GproteinA_insert"/>
</dbReference>
<dbReference type="InterPro" id="IPR027417">
    <property type="entry name" value="P-loop_NTPase"/>
</dbReference>
<dbReference type="PANTHER" id="PTHR10218">
    <property type="entry name" value="GTP-BINDING PROTEIN ALPHA SUBUNIT"/>
    <property type="match status" value="1"/>
</dbReference>
<dbReference type="PANTHER" id="PTHR10218:SF359">
    <property type="entry name" value="GUANINE NUCLEOTIDE-BINDING PROTEIN G(I) SUBUNIT ALPHA-1"/>
    <property type="match status" value="1"/>
</dbReference>
<dbReference type="Pfam" id="PF00503">
    <property type="entry name" value="G-alpha"/>
    <property type="match status" value="1"/>
</dbReference>
<dbReference type="PRINTS" id="PR00318">
    <property type="entry name" value="GPROTEINA"/>
</dbReference>
<dbReference type="PRINTS" id="PR00441">
    <property type="entry name" value="GPROTEINAI"/>
</dbReference>
<dbReference type="SMART" id="SM00275">
    <property type="entry name" value="G_alpha"/>
    <property type="match status" value="1"/>
</dbReference>
<dbReference type="SUPFAM" id="SSF52540">
    <property type="entry name" value="P-loop containing nucleoside triphosphate hydrolases"/>
    <property type="match status" value="1"/>
</dbReference>
<dbReference type="SUPFAM" id="SSF47895">
    <property type="entry name" value="Transducin (alpha subunit), insertion domain"/>
    <property type="match status" value="1"/>
</dbReference>
<dbReference type="PROSITE" id="PS51882">
    <property type="entry name" value="G_ALPHA"/>
    <property type="match status" value="1"/>
</dbReference>
<protein>
    <recommendedName>
        <fullName>Guanine nucleotide-binding protein G(i) subunit alpha-1</fullName>
        <ecNumber evidence="2">3.6.5.-</ecNumber>
    </recommendedName>
    <alternativeName>
        <fullName>Adenylate cyclase-inhibiting G alpha protein</fullName>
    </alternativeName>
</protein>
<comment type="function">
    <text evidence="1 2">Guanine nucleotide-binding proteins (G proteins) function as transducers downstream of G protein-coupled receptors (GPCRs) in numerous signaling cascades. The alpha chain contains the guanine nucleotide binding site and alternates between an active, GTP-bound state and an inactive, GDP-bound state. Signaling by an activated GPCR promotes GDP release and GTP binding. The alpha subunit has a low GTPase activity that converts bound GTP to GDP, thereby terminating the signal. Both GDP release and GTP hydrolysis are modulated by numerous regulatory proteins (By similarity). Signaling is mediated via effector proteins, such as adenylate cyclase. Inhibits adenylate cyclase activity of ADCY1, ADCY5 and ADCY6, leading to decreased intracellular cAMP levels (By similarity). The inactive GDP-bound form prevents the association of RGS14 with centrosomes and is required for the translocation of RGS14 from the cytoplasm to the plasma membrane. Required for normal cytokinesis during mitosis (By similarity). Required for cortical dynein-dynactin complex recruitment during metaphase (By similarity).</text>
</comment>
<comment type="catalytic activity">
    <reaction evidence="2">
        <text>GTP + H2O = GDP + phosphate + H(+)</text>
        <dbReference type="Rhea" id="RHEA:19669"/>
        <dbReference type="ChEBI" id="CHEBI:15377"/>
        <dbReference type="ChEBI" id="CHEBI:15378"/>
        <dbReference type="ChEBI" id="CHEBI:37565"/>
        <dbReference type="ChEBI" id="CHEBI:43474"/>
        <dbReference type="ChEBI" id="CHEBI:58189"/>
    </reaction>
    <physiologicalReaction direction="left-to-right" evidence="2">
        <dbReference type="Rhea" id="RHEA:19670"/>
    </physiologicalReaction>
</comment>
<comment type="subunit">
    <text evidence="1 2">Heterotrimeric G proteins are composed of 3 units; alpha, beta and gamma. The alpha chain contains the guanine nucleotide binding site. Part of a spindle orientation complex at least composed of GNAI1, GPSM2 and NUMA1. Identified in complex with the beta subunit GNB1 and the gamma subunit GNG1. Identified in complex with the beta subunit GNB1 and the gamma subunit GNG2. Component of the TAS2R14-GNAI1 complex, consisting of TAS2R14, GNAI1, GNB1 and GNG2; within the complex interacts with TAS2R14; this complex plays a role in the perception of bitterness (By similarity). GTP binding causes dissociation of the heterotrimer, liberating the individual subunits so that they can interact with downstream effector proteins. Interacts (GDP-bound form) with GPSM1; this inhibits guanine nucleotide exchange and GTP binding. Interacts (GDP-bound form) with GPSM2 (via GoLoco domains); this inhibits guanine nucleotide exchange. Interacts with RGS10; this strongly enhances GTP hydrolysis. Interacts with RGS1 and RGS16; this strongly enhances GTPase activity. Interacts with RGS4. Interacts with RGS12. Interacts (via active GTP- or inactive GDP-bound forms) with RGS14 (via RGS and GoLoco domains). Interacts with RGS3, RGS6, RGS7, RGS8, RGS17, RGS18 and RGS20 (in vitro). Interacts (GDP-bound form) with RIC8A (via C-terminus); promoting GNAI1 folding and association with the plasma membrane. Interacts (inactive GDP-bound form) with NUCB1 (via GBA motif); the interaction leads to activation of GNAI1 (By similarity). Interacts (inactive GDP-bound form) with CCDC88C/DAPLE (via GBA motif); the interaction leads to activation of GNAI1 (By similarity). Interacts (inactive GDP-bound form) with CCDC8A/GIV (via GBA motif) (By similarity).</text>
</comment>
<comment type="interaction">
    <interactant intactId="EBI-8309073">
        <id>P63097</id>
    </interactant>
    <interactant intactId="EBI-357141">
        <id>P62871</id>
        <label>GNB1</label>
    </interactant>
    <organismsDiffer>false</organismsDiffer>
    <experiments>3</experiments>
</comment>
<comment type="subcellular location">
    <subcellularLocation>
        <location evidence="1">Nucleus</location>
    </subcellularLocation>
    <subcellularLocation>
        <location evidence="1">Cytoplasm</location>
    </subcellularLocation>
    <subcellularLocation>
        <location evidence="1">Cell membrane</location>
        <topology evidence="1">Peripheral membrane protein</topology>
        <orientation evidence="1">Cytoplasmic side</orientation>
    </subcellularLocation>
    <subcellularLocation>
        <location evidence="1">Cytoplasm</location>
        <location evidence="1">Cytoskeleton</location>
        <location evidence="1">Microtubule organizing center</location>
        <location evidence="1">Centrosome</location>
    </subcellularLocation>
    <subcellularLocation>
        <location evidence="2">Cytoplasm</location>
        <location evidence="2">Cell cortex</location>
    </subcellularLocation>
    <subcellularLocation>
        <location evidence="1">Membrane</location>
        <topology evidence="1">Lipid-anchor</topology>
    </subcellularLocation>
    <text evidence="1">Localizes in the centrosomes of interphase and mitotic cells, but not in centrosomes during cytokinesis. Detected at the cleavage furrow or the midbody. Localized at the plasma membrane throughout mitosis. Colocalizes with RIC8A and RGS14 at the plasma membrane.</text>
</comment>
<comment type="PTM">
    <text evidence="1">Myristoylation at Gly-2 is required for membrane anchoring before palmitoylation.</text>
</comment>
<comment type="PTM">
    <text evidence="1">Palmitoylation at Cys-3 varies with membrane lipid composition.</text>
</comment>
<comment type="similarity">
    <text evidence="4">Belongs to the G-alpha family. G(i/o/t/z) subfamily.</text>
</comment>
<organism>
    <name type="scientific">Bos taurus</name>
    <name type="common">Bovine</name>
    <dbReference type="NCBI Taxonomy" id="9913"/>
    <lineage>
        <taxon>Eukaryota</taxon>
        <taxon>Metazoa</taxon>
        <taxon>Chordata</taxon>
        <taxon>Craniata</taxon>
        <taxon>Vertebrata</taxon>
        <taxon>Euteleostomi</taxon>
        <taxon>Mammalia</taxon>
        <taxon>Eutheria</taxon>
        <taxon>Laurasiatheria</taxon>
        <taxon>Artiodactyla</taxon>
        <taxon>Ruminantia</taxon>
        <taxon>Pecora</taxon>
        <taxon>Bovidae</taxon>
        <taxon>Bovinae</taxon>
        <taxon>Bos</taxon>
    </lineage>
</organism>
<evidence type="ECO:0000250" key="1">
    <source>
        <dbReference type="UniProtKB" id="P10824"/>
    </source>
</evidence>
<evidence type="ECO:0000250" key="2">
    <source>
        <dbReference type="UniProtKB" id="P63096"/>
    </source>
</evidence>
<evidence type="ECO:0000255" key="3">
    <source>
        <dbReference type="PROSITE-ProRule" id="PRU01230"/>
    </source>
</evidence>
<evidence type="ECO:0000305" key="4"/>
<evidence type="ECO:0007829" key="5">
    <source>
        <dbReference type="PDB" id="8X16"/>
    </source>
</evidence>
<evidence type="ECO:0007829" key="6">
    <source>
        <dbReference type="PDB" id="8X17"/>
    </source>
</evidence>
<evidence type="ECO:0007829" key="7">
    <source>
        <dbReference type="PDB" id="8YH3"/>
    </source>
</evidence>
<keyword id="KW-0002">3D-structure</keyword>
<keyword id="KW-0131">Cell cycle</keyword>
<keyword id="KW-0132">Cell division</keyword>
<keyword id="KW-1003">Cell membrane</keyword>
<keyword id="KW-0963">Cytoplasm</keyword>
<keyword id="KW-0206">Cytoskeleton</keyword>
<keyword id="KW-0342">GTP-binding</keyword>
<keyword id="KW-0378">Hydrolase</keyword>
<keyword id="KW-0449">Lipoprotein</keyword>
<keyword id="KW-0460">Magnesium</keyword>
<keyword id="KW-0472">Membrane</keyword>
<keyword id="KW-0479">Metal-binding</keyword>
<keyword id="KW-0498">Mitosis</keyword>
<keyword id="KW-0519">Myristate</keyword>
<keyword id="KW-0547">Nucleotide-binding</keyword>
<keyword id="KW-0539">Nucleus</keyword>
<keyword id="KW-0564">Palmitate</keyword>
<keyword id="KW-1185">Reference proteome</keyword>
<keyword id="KW-0807">Transducer</keyword>
<keyword id="KW-0813">Transport</keyword>
<accession>P63097</accession>
<accession>P04898</accession>
<accession>P11015</accession>
<accession>P31871</accession>
<accession>Q2KJC0</accession>
<sequence>MGCTLSAEDKAAVERSKMIDRNLREDGEKAAREVKLLLLGAGESGKSTIVKQMKIIHEAGYSEEECKQYKAVVYSNTIQSIIAIIRAMGRLKIDFGDSARADDARQLFVLAGAAEEGFMTAELAGVIKRLWKDSGVQACFNRSREYQLNDSAAYYLNDLDRIAQPNYIPTQQDVLRTRVKTTGIVETHFTFKDLHFKMFDVGGQRSERKKWIHCFEGVTAIIFCVALSDYDLVLAEDEEMNRMHESMKLFDSICNNKWFTDTSIILFLNKKDLFEEKIKKSPLTICYPEYAGSNTYEEAAAYIQCQFEDLNKRKDTKEIYTHFTCATDTKNVQFVFDAVTDVIIKNNLKDCGLF</sequence>
<name>GNAI1_BOVIN</name>
<gene>
    <name type="primary">GNAI1</name>
</gene>